<evidence type="ECO:0000255" key="1">
    <source>
        <dbReference type="HAMAP-Rule" id="MF_00489"/>
    </source>
</evidence>
<keyword id="KW-1185">Reference proteome</keyword>
<gene>
    <name evidence="1" type="primary">yaiI</name>
    <name type="ordered locus">ECS88_0382</name>
</gene>
<comment type="similarity">
    <text evidence="1">Belongs to the UPF0178 family.</text>
</comment>
<accession>B7MD46</accession>
<protein>
    <recommendedName>
        <fullName evidence="1">UPF0178 protein YaiI</fullName>
    </recommendedName>
</protein>
<organism>
    <name type="scientific">Escherichia coli O45:K1 (strain S88 / ExPEC)</name>
    <dbReference type="NCBI Taxonomy" id="585035"/>
    <lineage>
        <taxon>Bacteria</taxon>
        <taxon>Pseudomonadati</taxon>
        <taxon>Pseudomonadota</taxon>
        <taxon>Gammaproteobacteria</taxon>
        <taxon>Enterobacterales</taxon>
        <taxon>Enterobacteriaceae</taxon>
        <taxon>Escherichia</taxon>
    </lineage>
</organism>
<feature type="chain" id="PRO_1000126184" description="UPF0178 protein YaiI">
    <location>
        <begin position="1"/>
        <end position="152"/>
    </location>
</feature>
<dbReference type="EMBL" id="CU928161">
    <property type="protein sequence ID" value="CAR01731.1"/>
    <property type="molecule type" value="Genomic_DNA"/>
</dbReference>
<dbReference type="RefSeq" id="WP_000158159.1">
    <property type="nucleotide sequence ID" value="NC_011742.1"/>
</dbReference>
<dbReference type="KEGG" id="ecz:ECS88_0382"/>
<dbReference type="HOGENOM" id="CLU_106619_2_1_6"/>
<dbReference type="Proteomes" id="UP000000747">
    <property type="component" value="Chromosome"/>
</dbReference>
<dbReference type="CDD" id="cd18720">
    <property type="entry name" value="PIN_YqxD-like"/>
    <property type="match status" value="1"/>
</dbReference>
<dbReference type="HAMAP" id="MF_00489">
    <property type="entry name" value="UPF0178"/>
    <property type="match status" value="1"/>
</dbReference>
<dbReference type="InterPro" id="IPR003791">
    <property type="entry name" value="UPF0178"/>
</dbReference>
<dbReference type="NCBIfam" id="NF001095">
    <property type="entry name" value="PRK00124.1"/>
    <property type="match status" value="1"/>
</dbReference>
<dbReference type="PANTHER" id="PTHR35146">
    <property type="entry name" value="UPF0178 PROTEIN YAII"/>
    <property type="match status" value="1"/>
</dbReference>
<dbReference type="PANTHER" id="PTHR35146:SF1">
    <property type="entry name" value="UPF0178 PROTEIN YAII"/>
    <property type="match status" value="1"/>
</dbReference>
<dbReference type="Pfam" id="PF02639">
    <property type="entry name" value="DUF188"/>
    <property type="match status" value="1"/>
</dbReference>
<reference key="1">
    <citation type="journal article" date="2009" name="PLoS Genet.">
        <title>Organised genome dynamics in the Escherichia coli species results in highly diverse adaptive paths.</title>
        <authorList>
            <person name="Touchon M."/>
            <person name="Hoede C."/>
            <person name="Tenaillon O."/>
            <person name="Barbe V."/>
            <person name="Baeriswyl S."/>
            <person name="Bidet P."/>
            <person name="Bingen E."/>
            <person name="Bonacorsi S."/>
            <person name="Bouchier C."/>
            <person name="Bouvet O."/>
            <person name="Calteau A."/>
            <person name="Chiapello H."/>
            <person name="Clermont O."/>
            <person name="Cruveiller S."/>
            <person name="Danchin A."/>
            <person name="Diard M."/>
            <person name="Dossat C."/>
            <person name="Karoui M.E."/>
            <person name="Frapy E."/>
            <person name="Garry L."/>
            <person name="Ghigo J.M."/>
            <person name="Gilles A.M."/>
            <person name="Johnson J."/>
            <person name="Le Bouguenec C."/>
            <person name="Lescat M."/>
            <person name="Mangenot S."/>
            <person name="Martinez-Jehanne V."/>
            <person name="Matic I."/>
            <person name="Nassif X."/>
            <person name="Oztas S."/>
            <person name="Petit M.A."/>
            <person name="Pichon C."/>
            <person name="Rouy Z."/>
            <person name="Ruf C.S."/>
            <person name="Schneider D."/>
            <person name="Tourret J."/>
            <person name="Vacherie B."/>
            <person name="Vallenet D."/>
            <person name="Medigue C."/>
            <person name="Rocha E.P.C."/>
            <person name="Denamur E."/>
        </authorList>
    </citation>
    <scope>NUCLEOTIDE SEQUENCE [LARGE SCALE GENOMIC DNA]</scope>
    <source>
        <strain>S88 / ExPEC</strain>
    </source>
</reference>
<sequence length="152" mass="16969">MTIWVDADACPNVIKEILYRAAERMQMPLVLVANQSLRVPPSRFIRTLRVAAGFDVADNEIVRQCEAGDLVITADIPLAAEAIEKGAAALNPRGERYTPATIRERLTMRDFMDTLRASGIQTGGPDSLSQRDRQAFAAELEKWWLEVQRSRG</sequence>
<proteinExistence type="inferred from homology"/>
<name>YAII_ECO45</name>